<comment type="function">
    <text evidence="1">Catalyzes the conversion of 1-hydroxy-2-methyl-2-(E)-butenyl 4-diphosphate (HMBPP) into a mixture of isopentenyl diphosphate (IPP) and dimethylallyl diphosphate (DMAPP). Acts in the terminal step of the DOXP/MEP pathway for isoprenoid precursor biosynthesis.</text>
</comment>
<comment type="catalytic activity">
    <reaction evidence="1">
        <text>isopentenyl diphosphate + 2 oxidized [2Fe-2S]-[ferredoxin] + H2O = (2E)-4-hydroxy-3-methylbut-2-enyl diphosphate + 2 reduced [2Fe-2S]-[ferredoxin] + 2 H(+)</text>
        <dbReference type="Rhea" id="RHEA:24488"/>
        <dbReference type="Rhea" id="RHEA-COMP:10000"/>
        <dbReference type="Rhea" id="RHEA-COMP:10001"/>
        <dbReference type="ChEBI" id="CHEBI:15377"/>
        <dbReference type="ChEBI" id="CHEBI:15378"/>
        <dbReference type="ChEBI" id="CHEBI:33737"/>
        <dbReference type="ChEBI" id="CHEBI:33738"/>
        <dbReference type="ChEBI" id="CHEBI:128753"/>
        <dbReference type="ChEBI" id="CHEBI:128769"/>
        <dbReference type="EC" id="1.17.7.4"/>
    </reaction>
</comment>
<comment type="catalytic activity">
    <reaction evidence="1">
        <text>dimethylallyl diphosphate + 2 oxidized [2Fe-2S]-[ferredoxin] + H2O = (2E)-4-hydroxy-3-methylbut-2-enyl diphosphate + 2 reduced [2Fe-2S]-[ferredoxin] + 2 H(+)</text>
        <dbReference type="Rhea" id="RHEA:24825"/>
        <dbReference type="Rhea" id="RHEA-COMP:10000"/>
        <dbReference type="Rhea" id="RHEA-COMP:10001"/>
        <dbReference type="ChEBI" id="CHEBI:15377"/>
        <dbReference type="ChEBI" id="CHEBI:15378"/>
        <dbReference type="ChEBI" id="CHEBI:33737"/>
        <dbReference type="ChEBI" id="CHEBI:33738"/>
        <dbReference type="ChEBI" id="CHEBI:57623"/>
        <dbReference type="ChEBI" id="CHEBI:128753"/>
        <dbReference type="EC" id="1.17.7.4"/>
    </reaction>
</comment>
<comment type="cofactor">
    <cofactor evidence="1">
        <name>[4Fe-4S] cluster</name>
        <dbReference type="ChEBI" id="CHEBI:49883"/>
    </cofactor>
    <text evidence="1">Binds 1 [4Fe-4S] cluster per subunit.</text>
</comment>
<comment type="pathway">
    <text evidence="1">Isoprenoid biosynthesis; dimethylallyl diphosphate biosynthesis; dimethylallyl diphosphate from (2E)-4-hydroxy-3-methylbutenyl diphosphate: step 1/1.</text>
</comment>
<comment type="pathway">
    <text evidence="1">Isoprenoid biosynthesis; isopentenyl diphosphate biosynthesis via DXP pathway; isopentenyl diphosphate from 1-deoxy-D-xylulose 5-phosphate: step 6/6.</text>
</comment>
<comment type="subunit">
    <text evidence="1">Homodimer.</text>
</comment>
<comment type="similarity">
    <text evidence="1">Belongs to the IspH family.</text>
</comment>
<protein>
    <recommendedName>
        <fullName evidence="1">4-hydroxy-3-methylbut-2-enyl diphosphate reductase</fullName>
        <shortName evidence="1">HMBPP reductase</shortName>
        <ecNumber evidence="1">1.17.7.4</ecNumber>
    </recommendedName>
</protein>
<name>ISPH_KLEP3</name>
<reference key="1">
    <citation type="journal article" date="2008" name="PLoS Genet.">
        <title>Complete genome sequence of the N2-fixing broad host range endophyte Klebsiella pneumoniae 342 and virulence predictions verified in mice.</title>
        <authorList>
            <person name="Fouts D.E."/>
            <person name="Tyler H.L."/>
            <person name="DeBoy R.T."/>
            <person name="Daugherty S."/>
            <person name="Ren Q."/>
            <person name="Badger J.H."/>
            <person name="Durkin A.S."/>
            <person name="Huot H."/>
            <person name="Shrivastava S."/>
            <person name="Kothari S."/>
            <person name="Dodson R.J."/>
            <person name="Mohamoud Y."/>
            <person name="Khouri H."/>
            <person name="Roesch L.F.W."/>
            <person name="Krogfelt K.A."/>
            <person name="Struve C."/>
            <person name="Triplett E.W."/>
            <person name="Methe B.A."/>
        </authorList>
    </citation>
    <scope>NUCLEOTIDE SEQUENCE [LARGE SCALE GENOMIC DNA]</scope>
    <source>
        <strain>342</strain>
    </source>
</reference>
<sequence>MQILLANPRGFCAGVDRAISIVENALTLYGAPIYVRHEVVHNRYVVDSLRKRGAIFIEQISEVPDGAILIFSAHGVSQAVRNEAKSRDLTVFDATCPLVTKVHMEVARASRRGEESILIGHAGHPEVEGTMGQYNNPQGGMYLVESPEDVLKLEVKNDARLSFMTQTTLSVDDTSDVIDALRARFPKIVGPRKDDICYATTNRQEAVRALAEQADVVLVVGSKNSSNSNRLAELAQRMGKAAYLIDDASDIQEAWVKDAACVGVTAGASAPDILVQNVITRLQELGGGEAVPLEGREENIVFEVPKELRVDVREVE</sequence>
<organism>
    <name type="scientific">Klebsiella pneumoniae (strain 342)</name>
    <dbReference type="NCBI Taxonomy" id="507522"/>
    <lineage>
        <taxon>Bacteria</taxon>
        <taxon>Pseudomonadati</taxon>
        <taxon>Pseudomonadota</taxon>
        <taxon>Gammaproteobacteria</taxon>
        <taxon>Enterobacterales</taxon>
        <taxon>Enterobacteriaceae</taxon>
        <taxon>Klebsiella/Raoultella group</taxon>
        <taxon>Klebsiella</taxon>
        <taxon>Klebsiella pneumoniae complex</taxon>
    </lineage>
</organism>
<keyword id="KW-0004">4Fe-4S</keyword>
<keyword id="KW-0408">Iron</keyword>
<keyword id="KW-0411">Iron-sulfur</keyword>
<keyword id="KW-0414">Isoprene biosynthesis</keyword>
<keyword id="KW-0479">Metal-binding</keyword>
<keyword id="KW-0560">Oxidoreductase</keyword>
<gene>
    <name evidence="1" type="primary">ispH</name>
    <name type="ordered locus">KPK_4732</name>
</gene>
<evidence type="ECO:0000255" key="1">
    <source>
        <dbReference type="HAMAP-Rule" id="MF_00191"/>
    </source>
</evidence>
<proteinExistence type="inferred from homology"/>
<feature type="chain" id="PRO_1000098955" description="4-hydroxy-3-methylbut-2-enyl diphosphate reductase">
    <location>
        <begin position="1"/>
        <end position="316"/>
    </location>
</feature>
<feature type="active site" description="Proton donor" evidence="1">
    <location>
        <position position="126"/>
    </location>
</feature>
<feature type="binding site" evidence="1">
    <location>
        <position position="12"/>
    </location>
    <ligand>
        <name>[4Fe-4S] cluster</name>
        <dbReference type="ChEBI" id="CHEBI:49883"/>
    </ligand>
</feature>
<feature type="binding site" evidence="1">
    <location>
        <position position="41"/>
    </location>
    <ligand>
        <name>(2E)-4-hydroxy-3-methylbut-2-enyl diphosphate</name>
        <dbReference type="ChEBI" id="CHEBI:128753"/>
    </ligand>
</feature>
<feature type="binding site" evidence="1">
    <location>
        <position position="41"/>
    </location>
    <ligand>
        <name>dimethylallyl diphosphate</name>
        <dbReference type="ChEBI" id="CHEBI:57623"/>
    </ligand>
</feature>
<feature type="binding site" evidence="1">
    <location>
        <position position="41"/>
    </location>
    <ligand>
        <name>isopentenyl diphosphate</name>
        <dbReference type="ChEBI" id="CHEBI:128769"/>
    </ligand>
</feature>
<feature type="binding site" evidence="1">
    <location>
        <position position="74"/>
    </location>
    <ligand>
        <name>(2E)-4-hydroxy-3-methylbut-2-enyl diphosphate</name>
        <dbReference type="ChEBI" id="CHEBI:128753"/>
    </ligand>
</feature>
<feature type="binding site" evidence="1">
    <location>
        <position position="74"/>
    </location>
    <ligand>
        <name>dimethylallyl diphosphate</name>
        <dbReference type="ChEBI" id="CHEBI:57623"/>
    </ligand>
</feature>
<feature type="binding site" evidence="1">
    <location>
        <position position="74"/>
    </location>
    <ligand>
        <name>isopentenyl diphosphate</name>
        <dbReference type="ChEBI" id="CHEBI:128769"/>
    </ligand>
</feature>
<feature type="binding site" evidence="1">
    <location>
        <position position="96"/>
    </location>
    <ligand>
        <name>[4Fe-4S] cluster</name>
        <dbReference type="ChEBI" id="CHEBI:49883"/>
    </ligand>
</feature>
<feature type="binding site" evidence="1">
    <location>
        <position position="124"/>
    </location>
    <ligand>
        <name>(2E)-4-hydroxy-3-methylbut-2-enyl diphosphate</name>
        <dbReference type="ChEBI" id="CHEBI:128753"/>
    </ligand>
</feature>
<feature type="binding site" evidence="1">
    <location>
        <position position="124"/>
    </location>
    <ligand>
        <name>dimethylallyl diphosphate</name>
        <dbReference type="ChEBI" id="CHEBI:57623"/>
    </ligand>
</feature>
<feature type="binding site" evidence="1">
    <location>
        <position position="124"/>
    </location>
    <ligand>
        <name>isopentenyl diphosphate</name>
        <dbReference type="ChEBI" id="CHEBI:128769"/>
    </ligand>
</feature>
<feature type="binding site" evidence="1">
    <location>
        <position position="167"/>
    </location>
    <ligand>
        <name>(2E)-4-hydroxy-3-methylbut-2-enyl diphosphate</name>
        <dbReference type="ChEBI" id="CHEBI:128753"/>
    </ligand>
</feature>
<feature type="binding site" evidence="1">
    <location>
        <position position="197"/>
    </location>
    <ligand>
        <name>[4Fe-4S] cluster</name>
        <dbReference type="ChEBI" id="CHEBI:49883"/>
    </ligand>
</feature>
<feature type="binding site" evidence="1">
    <location>
        <position position="225"/>
    </location>
    <ligand>
        <name>(2E)-4-hydroxy-3-methylbut-2-enyl diphosphate</name>
        <dbReference type="ChEBI" id="CHEBI:128753"/>
    </ligand>
</feature>
<feature type="binding site" evidence="1">
    <location>
        <position position="225"/>
    </location>
    <ligand>
        <name>dimethylallyl diphosphate</name>
        <dbReference type="ChEBI" id="CHEBI:57623"/>
    </ligand>
</feature>
<feature type="binding site" evidence="1">
    <location>
        <position position="225"/>
    </location>
    <ligand>
        <name>isopentenyl diphosphate</name>
        <dbReference type="ChEBI" id="CHEBI:128769"/>
    </ligand>
</feature>
<feature type="binding site" evidence="1">
    <location>
        <position position="226"/>
    </location>
    <ligand>
        <name>(2E)-4-hydroxy-3-methylbut-2-enyl diphosphate</name>
        <dbReference type="ChEBI" id="CHEBI:128753"/>
    </ligand>
</feature>
<feature type="binding site" evidence="1">
    <location>
        <position position="226"/>
    </location>
    <ligand>
        <name>dimethylallyl diphosphate</name>
        <dbReference type="ChEBI" id="CHEBI:57623"/>
    </ligand>
</feature>
<feature type="binding site" evidence="1">
    <location>
        <position position="226"/>
    </location>
    <ligand>
        <name>isopentenyl diphosphate</name>
        <dbReference type="ChEBI" id="CHEBI:128769"/>
    </ligand>
</feature>
<feature type="binding site" evidence="1">
    <location>
        <position position="227"/>
    </location>
    <ligand>
        <name>(2E)-4-hydroxy-3-methylbut-2-enyl diphosphate</name>
        <dbReference type="ChEBI" id="CHEBI:128753"/>
    </ligand>
</feature>
<feature type="binding site" evidence="1">
    <location>
        <position position="227"/>
    </location>
    <ligand>
        <name>dimethylallyl diphosphate</name>
        <dbReference type="ChEBI" id="CHEBI:57623"/>
    </ligand>
</feature>
<feature type="binding site" evidence="1">
    <location>
        <position position="227"/>
    </location>
    <ligand>
        <name>isopentenyl diphosphate</name>
        <dbReference type="ChEBI" id="CHEBI:128769"/>
    </ligand>
</feature>
<feature type="binding site" evidence="1">
    <location>
        <position position="269"/>
    </location>
    <ligand>
        <name>(2E)-4-hydroxy-3-methylbut-2-enyl diphosphate</name>
        <dbReference type="ChEBI" id="CHEBI:128753"/>
    </ligand>
</feature>
<feature type="binding site" evidence="1">
    <location>
        <position position="269"/>
    </location>
    <ligand>
        <name>dimethylallyl diphosphate</name>
        <dbReference type="ChEBI" id="CHEBI:57623"/>
    </ligand>
</feature>
<feature type="binding site" evidence="1">
    <location>
        <position position="269"/>
    </location>
    <ligand>
        <name>isopentenyl diphosphate</name>
        <dbReference type="ChEBI" id="CHEBI:128769"/>
    </ligand>
</feature>
<accession>B5Y232</accession>
<dbReference type="EC" id="1.17.7.4" evidence="1"/>
<dbReference type="EMBL" id="CP000964">
    <property type="protein sequence ID" value="ACI09114.1"/>
    <property type="molecule type" value="Genomic_DNA"/>
</dbReference>
<dbReference type="SMR" id="B5Y232"/>
<dbReference type="KEGG" id="kpe:KPK_4732"/>
<dbReference type="HOGENOM" id="CLU_027486_1_0_6"/>
<dbReference type="UniPathway" id="UPA00056">
    <property type="reaction ID" value="UER00097"/>
</dbReference>
<dbReference type="UniPathway" id="UPA00059">
    <property type="reaction ID" value="UER00105"/>
</dbReference>
<dbReference type="Proteomes" id="UP000001734">
    <property type="component" value="Chromosome"/>
</dbReference>
<dbReference type="GO" id="GO:0051539">
    <property type="term" value="F:4 iron, 4 sulfur cluster binding"/>
    <property type="evidence" value="ECO:0007669"/>
    <property type="project" value="UniProtKB-UniRule"/>
</dbReference>
<dbReference type="GO" id="GO:0051745">
    <property type="term" value="F:4-hydroxy-3-methylbut-2-enyl diphosphate reductase activity"/>
    <property type="evidence" value="ECO:0007669"/>
    <property type="project" value="UniProtKB-UniRule"/>
</dbReference>
<dbReference type="GO" id="GO:0046872">
    <property type="term" value="F:metal ion binding"/>
    <property type="evidence" value="ECO:0007669"/>
    <property type="project" value="UniProtKB-KW"/>
</dbReference>
<dbReference type="GO" id="GO:0050992">
    <property type="term" value="P:dimethylallyl diphosphate biosynthetic process"/>
    <property type="evidence" value="ECO:0007669"/>
    <property type="project" value="UniProtKB-UniRule"/>
</dbReference>
<dbReference type="GO" id="GO:0019288">
    <property type="term" value="P:isopentenyl diphosphate biosynthetic process, methylerythritol 4-phosphate pathway"/>
    <property type="evidence" value="ECO:0007669"/>
    <property type="project" value="UniProtKB-UniRule"/>
</dbReference>
<dbReference type="GO" id="GO:0016114">
    <property type="term" value="P:terpenoid biosynthetic process"/>
    <property type="evidence" value="ECO:0007669"/>
    <property type="project" value="UniProtKB-UniRule"/>
</dbReference>
<dbReference type="CDD" id="cd13944">
    <property type="entry name" value="lytB_ispH"/>
    <property type="match status" value="1"/>
</dbReference>
<dbReference type="FunFam" id="3.40.50.11270:FF:000001">
    <property type="entry name" value="4-hydroxy-3-methylbut-2-enyl diphosphate reductase"/>
    <property type="match status" value="1"/>
</dbReference>
<dbReference type="Gene3D" id="3.40.50.11270">
    <property type="match status" value="1"/>
</dbReference>
<dbReference type="Gene3D" id="3.40.1010.20">
    <property type="entry name" value="4-hydroxy-3-methylbut-2-enyl diphosphate reductase, catalytic domain"/>
    <property type="match status" value="2"/>
</dbReference>
<dbReference type="HAMAP" id="MF_00191">
    <property type="entry name" value="IspH"/>
    <property type="match status" value="1"/>
</dbReference>
<dbReference type="InterPro" id="IPR003451">
    <property type="entry name" value="LytB/IspH"/>
</dbReference>
<dbReference type="NCBIfam" id="TIGR00216">
    <property type="entry name" value="ispH_lytB"/>
    <property type="match status" value="1"/>
</dbReference>
<dbReference type="NCBIfam" id="NF002188">
    <property type="entry name" value="PRK01045.1-2"/>
    <property type="match status" value="1"/>
</dbReference>
<dbReference type="NCBIfam" id="NF002190">
    <property type="entry name" value="PRK01045.1-4"/>
    <property type="match status" value="1"/>
</dbReference>
<dbReference type="PANTHER" id="PTHR30426">
    <property type="entry name" value="4-HYDROXY-3-METHYLBUT-2-ENYL DIPHOSPHATE REDUCTASE"/>
    <property type="match status" value="1"/>
</dbReference>
<dbReference type="PANTHER" id="PTHR30426:SF0">
    <property type="entry name" value="4-HYDROXY-3-METHYLBUT-2-ENYL DIPHOSPHATE REDUCTASE"/>
    <property type="match status" value="1"/>
</dbReference>
<dbReference type="Pfam" id="PF02401">
    <property type="entry name" value="LYTB"/>
    <property type="match status" value="1"/>
</dbReference>